<organism>
    <name type="scientific">Streptococcus pyogenes serotype M4 (strain MGAS10750)</name>
    <dbReference type="NCBI Taxonomy" id="370554"/>
    <lineage>
        <taxon>Bacteria</taxon>
        <taxon>Bacillati</taxon>
        <taxon>Bacillota</taxon>
        <taxon>Bacilli</taxon>
        <taxon>Lactobacillales</taxon>
        <taxon>Streptococcaceae</taxon>
        <taxon>Streptococcus</taxon>
    </lineage>
</organism>
<protein>
    <recommendedName>
        <fullName evidence="1">Aspartate carbamoyltransferase catalytic subunit</fullName>
        <ecNumber evidence="1">2.1.3.2</ecNumber>
    </recommendedName>
    <alternativeName>
        <fullName evidence="1">Aspartate transcarbamylase</fullName>
        <shortName evidence="1">ATCase</shortName>
    </alternativeName>
</protein>
<accession>Q1J794</accession>
<dbReference type="EC" id="2.1.3.2" evidence="1"/>
<dbReference type="EMBL" id="CP000262">
    <property type="protein sequence ID" value="ABF37680.1"/>
    <property type="status" value="ALT_INIT"/>
    <property type="molecule type" value="Genomic_DNA"/>
</dbReference>
<dbReference type="SMR" id="Q1J794"/>
<dbReference type="KEGG" id="spi:MGAS10750_Spy0730"/>
<dbReference type="HOGENOM" id="CLU_043846_2_1_9"/>
<dbReference type="UniPathway" id="UPA00070">
    <property type="reaction ID" value="UER00116"/>
</dbReference>
<dbReference type="Proteomes" id="UP000002434">
    <property type="component" value="Chromosome"/>
</dbReference>
<dbReference type="GO" id="GO:0005829">
    <property type="term" value="C:cytosol"/>
    <property type="evidence" value="ECO:0007669"/>
    <property type="project" value="TreeGrafter"/>
</dbReference>
<dbReference type="GO" id="GO:0016597">
    <property type="term" value="F:amino acid binding"/>
    <property type="evidence" value="ECO:0007669"/>
    <property type="project" value="InterPro"/>
</dbReference>
<dbReference type="GO" id="GO:0004070">
    <property type="term" value="F:aspartate carbamoyltransferase activity"/>
    <property type="evidence" value="ECO:0007669"/>
    <property type="project" value="UniProtKB-UniRule"/>
</dbReference>
<dbReference type="GO" id="GO:0006207">
    <property type="term" value="P:'de novo' pyrimidine nucleobase biosynthetic process"/>
    <property type="evidence" value="ECO:0007669"/>
    <property type="project" value="InterPro"/>
</dbReference>
<dbReference type="GO" id="GO:0044205">
    <property type="term" value="P:'de novo' UMP biosynthetic process"/>
    <property type="evidence" value="ECO:0007669"/>
    <property type="project" value="UniProtKB-UniRule"/>
</dbReference>
<dbReference type="GO" id="GO:0006520">
    <property type="term" value="P:amino acid metabolic process"/>
    <property type="evidence" value="ECO:0007669"/>
    <property type="project" value="InterPro"/>
</dbReference>
<dbReference type="FunFam" id="3.40.50.1370:FF:000011">
    <property type="entry name" value="Aspartate carbamoyltransferase"/>
    <property type="match status" value="1"/>
</dbReference>
<dbReference type="Gene3D" id="3.40.50.1370">
    <property type="entry name" value="Aspartate/ornithine carbamoyltransferase"/>
    <property type="match status" value="2"/>
</dbReference>
<dbReference type="HAMAP" id="MF_00001">
    <property type="entry name" value="Asp_carb_tr"/>
    <property type="match status" value="1"/>
</dbReference>
<dbReference type="InterPro" id="IPR006132">
    <property type="entry name" value="Asp/Orn_carbamoyltranf_P-bd"/>
</dbReference>
<dbReference type="InterPro" id="IPR006130">
    <property type="entry name" value="Asp/Orn_carbamoylTrfase"/>
</dbReference>
<dbReference type="InterPro" id="IPR036901">
    <property type="entry name" value="Asp/Orn_carbamoylTrfase_sf"/>
</dbReference>
<dbReference type="InterPro" id="IPR002082">
    <property type="entry name" value="Asp_carbamoyltransf"/>
</dbReference>
<dbReference type="InterPro" id="IPR006131">
    <property type="entry name" value="Asp_carbamoyltransf_Asp/Orn-bd"/>
</dbReference>
<dbReference type="NCBIfam" id="TIGR00670">
    <property type="entry name" value="asp_carb_tr"/>
    <property type="match status" value="1"/>
</dbReference>
<dbReference type="NCBIfam" id="NF002032">
    <property type="entry name" value="PRK00856.1"/>
    <property type="match status" value="1"/>
</dbReference>
<dbReference type="PANTHER" id="PTHR45753:SF6">
    <property type="entry name" value="ASPARTATE CARBAMOYLTRANSFERASE"/>
    <property type="match status" value="1"/>
</dbReference>
<dbReference type="PANTHER" id="PTHR45753">
    <property type="entry name" value="ORNITHINE CARBAMOYLTRANSFERASE, MITOCHONDRIAL"/>
    <property type="match status" value="1"/>
</dbReference>
<dbReference type="Pfam" id="PF00185">
    <property type="entry name" value="OTCace"/>
    <property type="match status" value="1"/>
</dbReference>
<dbReference type="Pfam" id="PF02729">
    <property type="entry name" value="OTCace_N"/>
    <property type="match status" value="1"/>
</dbReference>
<dbReference type="PRINTS" id="PR00100">
    <property type="entry name" value="AOTCASE"/>
</dbReference>
<dbReference type="PRINTS" id="PR00101">
    <property type="entry name" value="ATCASE"/>
</dbReference>
<dbReference type="SUPFAM" id="SSF53671">
    <property type="entry name" value="Aspartate/ornithine carbamoyltransferase"/>
    <property type="match status" value="1"/>
</dbReference>
<dbReference type="PROSITE" id="PS00097">
    <property type="entry name" value="CARBAMOYLTRANSFERASE"/>
    <property type="match status" value="1"/>
</dbReference>
<feature type="chain" id="PRO_0000321167" description="Aspartate carbamoyltransferase catalytic subunit">
    <location>
        <begin position="1"/>
        <end position="311"/>
    </location>
</feature>
<feature type="binding site" evidence="1">
    <location>
        <position position="59"/>
    </location>
    <ligand>
        <name>carbamoyl phosphate</name>
        <dbReference type="ChEBI" id="CHEBI:58228"/>
    </ligand>
</feature>
<feature type="binding site" evidence="1">
    <location>
        <position position="60"/>
    </location>
    <ligand>
        <name>carbamoyl phosphate</name>
        <dbReference type="ChEBI" id="CHEBI:58228"/>
    </ligand>
</feature>
<feature type="binding site" evidence="1">
    <location>
        <position position="87"/>
    </location>
    <ligand>
        <name>L-aspartate</name>
        <dbReference type="ChEBI" id="CHEBI:29991"/>
    </ligand>
</feature>
<feature type="binding site" evidence="1">
    <location>
        <position position="109"/>
    </location>
    <ligand>
        <name>carbamoyl phosphate</name>
        <dbReference type="ChEBI" id="CHEBI:58228"/>
    </ligand>
</feature>
<feature type="binding site" evidence="1">
    <location>
        <position position="139"/>
    </location>
    <ligand>
        <name>carbamoyl phosphate</name>
        <dbReference type="ChEBI" id="CHEBI:58228"/>
    </ligand>
</feature>
<feature type="binding site" evidence="1">
    <location>
        <position position="142"/>
    </location>
    <ligand>
        <name>carbamoyl phosphate</name>
        <dbReference type="ChEBI" id="CHEBI:58228"/>
    </ligand>
</feature>
<feature type="binding site" evidence="1">
    <location>
        <position position="172"/>
    </location>
    <ligand>
        <name>L-aspartate</name>
        <dbReference type="ChEBI" id="CHEBI:29991"/>
    </ligand>
</feature>
<feature type="binding site" evidence="1">
    <location>
        <position position="224"/>
    </location>
    <ligand>
        <name>L-aspartate</name>
        <dbReference type="ChEBI" id="CHEBI:29991"/>
    </ligand>
</feature>
<feature type="binding site" evidence="1">
    <location>
        <position position="265"/>
    </location>
    <ligand>
        <name>carbamoyl phosphate</name>
        <dbReference type="ChEBI" id="CHEBI:58228"/>
    </ligand>
</feature>
<feature type="binding site" evidence="1">
    <location>
        <position position="266"/>
    </location>
    <ligand>
        <name>carbamoyl phosphate</name>
        <dbReference type="ChEBI" id="CHEBI:58228"/>
    </ligand>
</feature>
<sequence length="311" mass="34645">MSVVNNRVALTNLVSMEALTTEEVLGLINRGSEYKAGKVVISDHQKDLVANLFFENSTRTHKSFEVAEKKLGLTVLDFNADASAVNKGESLYDTVLTMSALGTDICVIRHPEDDYYKELVESPTITASIVNGGDGSGQHPSQCLLDLLTIYEEFGRFEGLKIAIAGDLTHSRVAKSNMQILKRLGAELYFYGPEEWYSEAFNAYGTYIAIDQIIKELDVLMLLRVQHERHDGHQSFSKESYHQAFGLTQERYQQLKDSAIIMHPAPVNRDVEIADSLVEAPKARIVSQMANGVFVRMAIIEAILNGRNKNS</sequence>
<keyword id="KW-0665">Pyrimidine biosynthesis</keyword>
<keyword id="KW-0808">Transferase</keyword>
<gene>
    <name evidence="1" type="primary">pyrB</name>
    <name type="ordered locus">MGAS10750_Spy0730</name>
</gene>
<evidence type="ECO:0000255" key="1">
    <source>
        <dbReference type="HAMAP-Rule" id="MF_00001"/>
    </source>
</evidence>
<evidence type="ECO:0000305" key="2"/>
<name>PYRB_STRPF</name>
<reference key="1">
    <citation type="journal article" date="2006" name="Proc. Natl. Acad. Sci. U.S.A.">
        <title>Molecular genetic anatomy of inter- and intraserotype variation in the human bacterial pathogen group A Streptococcus.</title>
        <authorList>
            <person name="Beres S.B."/>
            <person name="Richter E.W."/>
            <person name="Nagiec M.J."/>
            <person name="Sumby P."/>
            <person name="Porcella S.F."/>
            <person name="DeLeo F.R."/>
            <person name="Musser J.M."/>
        </authorList>
    </citation>
    <scope>NUCLEOTIDE SEQUENCE [LARGE SCALE GENOMIC DNA]</scope>
    <source>
        <strain>MGAS10750</strain>
    </source>
</reference>
<proteinExistence type="inferred from homology"/>
<comment type="function">
    <text evidence="1">Catalyzes the condensation of carbamoyl phosphate and aspartate to form carbamoyl aspartate and inorganic phosphate, the committed step in the de novo pyrimidine nucleotide biosynthesis pathway.</text>
</comment>
<comment type="catalytic activity">
    <reaction evidence="1">
        <text>carbamoyl phosphate + L-aspartate = N-carbamoyl-L-aspartate + phosphate + H(+)</text>
        <dbReference type="Rhea" id="RHEA:20013"/>
        <dbReference type="ChEBI" id="CHEBI:15378"/>
        <dbReference type="ChEBI" id="CHEBI:29991"/>
        <dbReference type="ChEBI" id="CHEBI:32814"/>
        <dbReference type="ChEBI" id="CHEBI:43474"/>
        <dbReference type="ChEBI" id="CHEBI:58228"/>
        <dbReference type="EC" id="2.1.3.2"/>
    </reaction>
</comment>
<comment type="pathway">
    <text evidence="1">Pyrimidine metabolism; UMP biosynthesis via de novo pathway; (S)-dihydroorotate from bicarbonate: step 2/3.</text>
</comment>
<comment type="subunit">
    <text evidence="1">Heterododecamer (2C3:3R2) of six catalytic PyrB chains organized as two trimers (C3), and six regulatory PyrI chains organized as three dimers (R2).</text>
</comment>
<comment type="similarity">
    <text evidence="1">Belongs to the aspartate/ornithine carbamoyltransferase superfamily. ATCase family.</text>
</comment>
<comment type="sequence caution" evidence="2">
    <conflict type="erroneous initiation">
        <sequence resource="EMBL-CDS" id="ABF37680"/>
    </conflict>
</comment>